<gene>
    <name type="ordered locus">SAV0846</name>
</gene>
<name>Y846_STAAM</name>
<proteinExistence type="inferred from homology"/>
<comment type="similarity">
    <text evidence="1">Belongs to the iron-sulfur cluster assembly SufBD family.</text>
</comment>
<evidence type="ECO:0000305" key="1"/>
<accession>Q99VF9</accession>
<reference key="1">
    <citation type="journal article" date="2001" name="Lancet">
        <title>Whole genome sequencing of meticillin-resistant Staphylococcus aureus.</title>
        <authorList>
            <person name="Kuroda M."/>
            <person name="Ohta T."/>
            <person name="Uchiyama I."/>
            <person name="Baba T."/>
            <person name="Yuzawa H."/>
            <person name="Kobayashi I."/>
            <person name="Cui L."/>
            <person name="Oguchi A."/>
            <person name="Aoki K."/>
            <person name="Nagai Y."/>
            <person name="Lian J.-Q."/>
            <person name="Ito T."/>
            <person name="Kanamori M."/>
            <person name="Matsumaru H."/>
            <person name="Maruyama A."/>
            <person name="Murakami H."/>
            <person name="Hosoyama A."/>
            <person name="Mizutani-Ui Y."/>
            <person name="Takahashi N.K."/>
            <person name="Sawano T."/>
            <person name="Inoue R."/>
            <person name="Kaito C."/>
            <person name="Sekimizu K."/>
            <person name="Hirakawa H."/>
            <person name="Kuhara S."/>
            <person name="Goto S."/>
            <person name="Yabuzaki J."/>
            <person name="Kanehisa M."/>
            <person name="Yamashita A."/>
            <person name="Oshima K."/>
            <person name="Furuya K."/>
            <person name="Yoshino C."/>
            <person name="Shiba T."/>
            <person name="Hattori M."/>
            <person name="Ogasawara N."/>
            <person name="Hayashi H."/>
            <person name="Hiramatsu K."/>
        </authorList>
    </citation>
    <scope>NUCLEOTIDE SEQUENCE [LARGE SCALE GENOMIC DNA]</scope>
    <source>
        <strain>Mu50 / ATCC 700699</strain>
    </source>
</reference>
<sequence length="465" mass="52531">MAKKAPDVGDYKYGFHDDDVSIFRSERGLTENIVREISNMKNEPEWMLDFRLKSLKLFYKMPMPQWGGDLSELNFDDITYYVKPSEQAERSWDEVPEEIKRTFDKLGIPEAEQKYLAGVSAQYESEVVYHNMEKELEEKGIIFKDTDSALQENEELFKKYFASVVPAADNKFAALNSAVWSGGSFIYVPKNIKLDTPLQAYFRINSENMGQFERTLIIADEGASVHYVEGCTAPVYTTSSLHSAVVEIIVHKDAHVRYTTIQNWANNVYNLVTKRTFVYENGNMEWVDGNLGSKLTMKYPNCVLLGEGAKGSTLSIAFAGKGQVQDAGAKMIHKAPNTSSTIVSKSISKNGGKVIYRGIVHFGRKAKGARSNIECDTLILDNESTSDTIPYNEVFNDQISLEHEAKVSKVSEEQLFYLMSRGISEEEATEMIVMGFIEPFTKELPMEYAVEMNRLIKFEMEGSIG</sequence>
<organism>
    <name type="scientific">Staphylococcus aureus (strain Mu50 / ATCC 700699)</name>
    <dbReference type="NCBI Taxonomy" id="158878"/>
    <lineage>
        <taxon>Bacteria</taxon>
        <taxon>Bacillati</taxon>
        <taxon>Bacillota</taxon>
        <taxon>Bacilli</taxon>
        <taxon>Bacillales</taxon>
        <taxon>Staphylococcaceae</taxon>
        <taxon>Staphylococcus</taxon>
    </lineage>
</organism>
<dbReference type="EMBL" id="BA000017">
    <property type="protein sequence ID" value="BAB57008.1"/>
    <property type="molecule type" value="Genomic_DNA"/>
</dbReference>
<dbReference type="SMR" id="Q99VF9"/>
<dbReference type="KEGG" id="sav:SAV0846"/>
<dbReference type="HOGENOM" id="CLU_026231_0_1_9"/>
<dbReference type="PhylomeDB" id="Q99VF9"/>
<dbReference type="Proteomes" id="UP000002481">
    <property type="component" value="Chromosome"/>
</dbReference>
<dbReference type="GO" id="GO:0016226">
    <property type="term" value="P:iron-sulfur cluster assembly"/>
    <property type="evidence" value="ECO:0007669"/>
    <property type="project" value="InterPro"/>
</dbReference>
<dbReference type="InterPro" id="IPR055346">
    <property type="entry name" value="Fe-S_cluster_assembly_SufBD"/>
</dbReference>
<dbReference type="InterPro" id="IPR010231">
    <property type="entry name" value="SUF_FeS_clus_asmbl_SufB"/>
</dbReference>
<dbReference type="InterPro" id="IPR000825">
    <property type="entry name" value="SUF_FeS_clus_asmbl_SufBD_core"/>
</dbReference>
<dbReference type="InterPro" id="IPR037284">
    <property type="entry name" value="SUF_FeS_clus_asmbl_SufBD_sf"/>
</dbReference>
<dbReference type="InterPro" id="IPR045595">
    <property type="entry name" value="SufBD_N"/>
</dbReference>
<dbReference type="NCBIfam" id="TIGR01980">
    <property type="entry name" value="sufB"/>
    <property type="match status" value="1"/>
</dbReference>
<dbReference type="PANTHER" id="PTHR30508">
    <property type="entry name" value="FES CLUSTER ASSEMBLY PROTEIN SUF"/>
    <property type="match status" value="1"/>
</dbReference>
<dbReference type="PANTHER" id="PTHR30508:SF1">
    <property type="entry name" value="UPF0051 PROTEIN ABCI8, CHLOROPLASTIC-RELATED"/>
    <property type="match status" value="1"/>
</dbReference>
<dbReference type="Pfam" id="PF01458">
    <property type="entry name" value="SUFBD_core"/>
    <property type="match status" value="1"/>
</dbReference>
<dbReference type="Pfam" id="PF19295">
    <property type="entry name" value="SufBD_N"/>
    <property type="match status" value="1"/>
</dbReference>
<dbReference type="SUPFAM" id="SSF101960">
    <property type="entry name" value="Stabilizer of iron transporter SufD"/>
    <property type="match status" value="1"/>
</dbReference>
<protein>
    <recommendedName>
        <fullName>Iron-sulfur cluster assembly SufBD family protein SAV0846</fullName>
    </recommendedName>
</protein>
<feature type="chain" id="PRO_0000298954" description="Iron-sulfur cluster assembly SufBD family protein SAV0846">
    <location>
        <begin position="1"/>
        <end position="465"/>
    </location>
</feature>